<proteinExistence type="inferred from homology"/>
<accession>Q5NQ29</accession>
<sequence>MAKLYFYYASMNAGKSTNLLQADFNYRERGMQTLLFTAGIDTRYKQGVIKSRIGLEAPAIAFFEESSLWDIIQEQHVKNPLHCILIDEAQFLNKNQVFELARVCDDLNIPVLCYGLRTDFQAELFEGSKYLLAIADKLAEIKSVCFCGAKATMNLRVDENKKPIRHGQQTEIGGNERYIALCRRHFIEKLNSL</sequence>
<gene>
    <name evidence="1" type="primary">tdk</name>
    <name type="ordered locus">ZMO0552</name>
</gene>
<name>KITH_ZYMMO</name>
<dbReference type="EC" id="2.7.1.21" evidence="1"/>
<dbReference type="EMBL" id="AE008692">
    <property type="protein sequence ID" value="AAV89176.1"/>
    <property type="molecule type" value="Genomic_DNA"/>
</dbReference>
<dbReference type="RefSeq" id="WP_011240458.1">
    <property type="nucleotide sequence ID" value="NZ_CP035711.1"/>
</dbReference>
<dbReference type="SMR" id="Q5NQ29"/>
<dbReference type="STRING" id="264203.ZMO0552"/>
<dbReference type="KEGG" id="zmo:ZMO0552"/>
<dbReference type="eggNOG" id="COG1435">
    <property type="taxonomic scope" value="Bacteria"/>
</dbReference>
<dbReference type="HOGENOM" id="CLU_064400_2_1_5"/>
<dbReference type="Proteomes" id="UP000001173">
    <property type="component" value="Chromosome"/>
</dbReference>
<dbReference type="GO" id="GO:0005829">
    <property type="term" value="C:cytosol"/>
    <property type="evidence" value="ECO:0007669"/>
    <property type="project" value="TreeGrafter"/>
</dbReference>
<dbReference type="GO" id="GO:0005524">
    <property type="term" value="F:ATP binding"/>
    <property type="evidence" value="ECO:0007669"/>
    <property type="project" value="UniProtKB-UniRule"/>
</dbReference>
<dbReference type="GO" id="GO:0004797">
    <property type="term" value="F:thymidine kinase activity"/>
    <property type="evidence" value="ECO:0007669"/>
    <property type="project" value="UniProtKB-UniRule"/>
</dbReference>
<dbReference type="GO" id="GO:0008270">
    <property type="term" value="F:zinc ion binding"/>
    <property type="evidence" value="ECO:0007669"/>
    <property type="project" value="UniProtKB-UniRule"/>
</dbReference>
<dbReference type="GO" id="GO:0071897">
    <property type="term" value="P:DNA biosynthetic process"/>
    <property type="evidence" value="ECO:0007669"/>
    <property type="project" value="UniProtKB-KW"/>
</dbReference>
<dbReference type="GO" id="GO:0046104">
    <property type="term" value="P:thymidine metabolic process"/>
    <property type="evidence" value="ECO:0007669"/>
    <property type="project" value="TreeGrafter"/>
</dbReference>
<dbReference type="FunFam" id="3.40.50.300:FF:000323">
    <property type="entry name" value="Thymidine kinase"/>
    <property type="match status" value="1"/>
</dbReference>
<dbReference type="Gene3D" id="3.30.60.20">
    <property type="match status" value="1"/>
</dbReference>
<dbReference type="Gene3D" id="3.40.50.300">
    <property type="entry name" value="P-loop containing nucleotide triphosphate hydrolases"/>
    <property type="match status" value="1"/>
</dbReference>
<dbReference type="HAMAP" id="MF_00124">
    <property type="entry name" value="Thymidine_kinase"/>
    <property type="match status" value="1"/>
</dbReference>
<dbReference type="InterPro" id="IPR027417">
    <property type="entry name" value="P-loop_NTPase"/>
</dbReference>
<dbReference type="InterPro" id="IPR001267">
    <property type="entry name" value="Thymidine_kinase"/>
</dbReference>
<dbReference type="InterPro" id="IPR020633">
    <property type="entry name" value="Thymidine_kinase_CS"/>
</dbReference>
<dbReference type="NCBIfam" id="NF003300">
    <property type="entry name" value="PRK04296.1-5"/>
    <property type="match status" value="1"/>
</dbReference>
<dbReference type="PANTHER" id="PTHR11441">
    <property type="entry name" value="THYMIDINE KINASE"/>
    <property type="match status" value="1"/>
</dbReference>
<dbReference type="PANTHER" id="PTHR11441:SF0">
    <property type="entry name" value="THYMIDINE KINASE, CYTOSOLIC"/>
    <property type="match status" value="1"/>
</dbReference>
<dbReference type="Pfam" id="PF00265">
    <property type="entry name" value="TK"/>
    <property type="match status" value="1"/>
</dbReference>
<dbReference type="PIRSF" id="PIRSF035805">
    <property type="entry name" value="TK_cell"/>
    <property type="match status" value="1"/>
</dbReference>
<dbReference type="SUPFAM" id="SSF57716">
    <property type="entry name" value="Glucocorticoid receptor-like (DNA-binding domain)"/>
    <property type="match status" value="1"/>
</dbReference>
<dbReference type="SUPFAM" id="SSF52540">
    <property type="entry name" value="P-loop containing nucleoside triphosphate hydrolases"/>
    <property type="match status" value="1"/>
</dbReference>
<dbReference type="PROSITE" id="PS00603">
    <property type="entry name" value="TK_CELLULAR_TYPE"/>
    <property type="match status" value="1"/>
</dbReference>
<keyword id="KW-0067">ATP-binding</keyword>
<keyword id="KW-0963">Cytoplasm</keyword>
<keyword id="KW-0237">DNA synthesis</keyword>
<keyword id="KW-0418">Kinase</keyword>
<keyword id="KW-0479">Metal-binding</keyword>
<keyword id="KW-0547">Nucleotide-binding</keyword>
<keyword id="KW-1185">Reference proteome</keyword>
<keyword id="KW-0808">Transferase</keyword>
<keyword id="KW-0862">Zinc</keyword>
<evidence type="ECO:0000255" key="1">
    <source>
        <dbReference type="HAMAP-Rule" id="MF_00124"/>
    </source>
</evidence>
<reference key="1">
    <citation type="journal article" date="2005" name="Nat. Biotechnol.">
        <title>The genome sequence of the ethanologenic bacterium Zymomonas mobilis ZM4.</title>
        <authorList>
            <person name="Seo J.-S."/>
            <person name="Chong H."/>
            <person name="Park H.S."/>
            <person name="Yoon K.-O."/>
            <person name="Jung C."/>
            <person name="Kim J.J."/>
            <person name="Hong J.H."/>
            <person name="Kim H."/>
            <person name="Kim J.-H."/>
            <person name="Kil J.-I."/>
            <person name="Park C.J."/>
            <person name="Oh H.-M."/>
            <person name="Lee J.-S."/>
            <person name="Jin S.-J."/>
            <person name="Um H.-W."/>
            <person name="Lee H.-J."/>
            <person name="Oh S.-J."/>
            <person name="Kim J.Y."/>
            <person name="Kang H.L."/>
            <person name="Lee S.Y."/>
            <person name="Lee K.J."/>
            <person name="Kang H.S."/>
        </authorList>
    </citation>
    <scope>NUCLEOTIDE SEQUENCE [LARGE SCALE GENOMIC DNA]</scope>
    <source>
        <strain>ATCC 31821 / ZM4 / CP4</strain>
    </source>
</reference>
<organism>
    <name type="scientific">Zymomonas mobilis subsp. mobilis (strain ATCC 31821 / ZM4 / CP4)</name>
    <dbReference type="NCBI Taxonomy" id="264203"/>
    <lineage>
        <taxon>Bacteria</taxon>
        <taxon>Pseudomonadati</taxon>
        <taxon>Pseudomonadota</taxon>
        <taxon>Alphaproteobacteria</taxon>
        <taxon>Sphingomonadales</taxon>
        <taxon>Zymomonadaceae</taxon>
        <taxon>Zymomonas</taxon>
    </lineage>
</organism>
<comment type="catalytic activity">
    <reaction evidence="1">
        <text>thymidine + ATP = dTMP + ADP + H(+)</text>
        <dbReference type="Rhea" id="RHEA:19129"/>
        <dbReference type="ChEBI" id="CHEBI:15378"/>
        <dbReference type="ChEBI" id="CHEBI:17748"/>
        <dbReference type="ChEBI" id="CHEBI:30616"/>
        <dbReference type="ChEBI" id="CHEBI:63528"/>
        <dbReference type="ChEBI" id="CHEBI:456216"/>
        <dbReference type="EC" id="2.7.1.21"/>
    </reaction>
</comment>
<comment type="subunit">
    <text evidence="1">Homotetramer.</text>
</comment>
<comment type="subcellular location">
    <subcellularLocation>
        <location evidence="1">Cytoplasm</location>
    </subcellularLocation>
</comment>
<comment type="similarity">
    <text evidence="1">Belongs to the thymidine kinase family.</text>
</comment>
<protein>
    <recommendedName>
        <fullName evidence="1">Thymidine kinase</fullName>
        <ecNumber evidence="1">2.7.1.21</ecNumber>
    </recommendedName>
</protein>
<feature type="chain" id="PRO_0000175053" description="Thymidine kinase">
    <location>
        <begin position="1"/>
        <end position="193"/>
    </location>
</feature>
<feature type="active site" description="Proton acceptor" evidence="1">
    <location>
        <position position="88"/>
    </location>
</feature>
<feature type="binding site" evidence="1">
    <location>
        <begin position="9"/>
        <end position="16"/>
    </location>
    <ligand>
        <name>ATP</name>
        <dbReference type="ChEBI" id="CHEBI:30616"/>
    </ligand>
</feature>
<feature type="binding site" evidence="1">
    <location>
        <begin position="87"/>
        <end position="90"/>
    </location>
    <ligand>
        <name>ATP</name>
        <dbReference type="ChEBI" id="CHEBI:30616"/>
    </ligand>
</feature>
<feature type="binding site" evidence="1">
    <location>
        <position position="145"/>
    </location>
    <ligand>
        <name>Zn(2+)</name>
        <dbReference type="ChEBI" id="CHEBI:29105"/>
    </ligand>
</feature>
<feature type="binding site" evidence="1">
    <location>
        <position position="147"/>
    </location>
    <ligand>
        <name>Zn(2+)</name>
        <dbReference type="ChEBI" id="CHEBI:29105"/>
    </ligand>
</feature>
<feature type="binding site" evidence="1">
    <location>
        <position position="182"/>
    </location>
    <ligand>
        <name>Zn(2+)</name>
        <dbReference type="ChEBI" id="CHEBI:29105"/>
    </ligand>
</feature>
<feature type="binding site" evidence="1">
    <location>
        <position position="185"/>
    </location>
    <ligand>
        <name>Zn(2+)</name>
        <dbReference type="ChEBI" id="CHEBI:29105"/>
    </ligand>
</feature>